<accession>Q44686</accession>
<comment type="function">
    <text evidence="1">The beta subunit is responsible for the synthesis of L-tryptophan from indole and L-serine.</text>
</comment>
<comment type="catalytic activity">
    <reaction>
        <text>(1S,2R)-1-C-(indol-3-yl)glycerol 3-phosphate + L-serine = D-glyceraldehyde 3-phosphate + L-tryptophan + H2O</text>
        <dbReference type="Rhea" id="RHEA:10532"/>
        <dbReference type="ChEBI" id="CHEBI:15377"/>
        <dbReference type="ChEBI" id="CHEBI:33384"/>
        <dbReference type="ChEBI" id="CHEBI:57912"/>
        <dbReference type="ChEBI" id="CHEBI:58866"/>
        <dbReference type="ChEBI" id="CHEBI:59776"/>
        <dbReference type="EC" id="4.2.1.20"/>
    </reaction>
</comment>
<comment type="cofactor">
    <cofactor evidence="1">
        <name>pyridoxal 5'-phosphate</name>
        <dbReference type="ChEBI" id="CHEBI:597326"/>
    </cofactor>
</comment>
<comment type="pathway">
    <text>Amino-acid biosynthesis; L-tryptophan biosynthesis; L-tryptophan from chorismate: step 5/5.</text>
</comment>
<comment type="subunit">
    <text evidence="1">Tetramer of two alpha and two beta chains.</text>
</comment>
<comment type="similarity">
    <text evidence="2">Belongs to the TrpB family.</text>
</comment>
<sequence>VAVSIACALFNLKCKIYMGYKDIKRQSPNVFRMKLMGAEVISVRNGSGTLKDACNEALRDWSGNYQKSHYIIGTAAGPHPYPTIVKEFQKMIGEEAKKQILEQEKKLPDAIIACVGGGSNAIGIFSEFMNEKVDLIGVEPAGRGIETGKHGAPLNHGRTGIYFGMKSSLMQNQEGQIEKSWSISAGLDFPSVGPEHAWLHSINRAQYVSITDIEALEAFQILSKK</sequence>
<proteinExistence type="inferred from homology"/>
<gene>
    <name type="primary">trpB</name>
</gene>
<keyword id="KW-0028">Amino-acid biosynthesis</keyword>
<keyword id="KW-0057">Aromatic amino acid biosynthesis</keyword>
<keyword id="KW-0456">Lyase</keyword>
<keyword id="KW-0663">Pyridoxal phosphate</keyword>
<keyword id="KW-0822">Tryptophan biosynthesis</keyword>
<reference key="1">
    <citation type="journal article" date="1996" name="J. Mol. Evol.">
        <title>The tryptophan biosynthetic pathway of aphid endosymbionts (Buchnera): genetics and evolution of plasmid-associated anthranilate synthase (trpEG) within the aphididae.</title>
        <authorList>
            <person name="Rouhbakhsh D."/>
            <person name="Lai C.-Y."/>
            <person name="von Dohlen C.D."/>
            <person name="Clark M.A."/>
            <person name="Baumann L."/>
            <person name="Baumann P."/>
            <person name="Moran N.A."/>
            <person name="Voegtlin D.J."/>
        </authorList>
    </citation>
    <scope>NUCLEOTIDE SEQUENCE [GENOMIC DNA]</scope>
</reference>
<name>TRPB_BUCRM</name>
<protein>
    <recommendedName>
        <fullName>Tryptophan synthase beta chain</fullName>
        <ecNumber>4.2.1.20</ecNumber>
    </recommendedName>
</protein>
<feature type="chain" id="PRO_0000098931" description="Tryptophan synthase beta chain">
    <location>
        <begin position="1" status="less than"/>
        <end position="225" status="greater than"/>
    </location>
</feature>
<feature type="non-terminal residue">
    <location>
        <position position="1"/>
    </location>
</feature>
<feature type="non-terminal residue">
    <location>
        <position position="225"/>
    </location>
</feature>
<dbReference type="EC" id="4.2.1.20"/>
<dbReference type="EMBL" id="L46356">
    <property type="protein sequence ID" value="AAC41537.1"/>
    <property type="molecule type" value="Genomic_DNA"/>
</dbReference>
<dbReference type="SMR" id="Q44686"/>
<dbReference type="UniPathway" id="UPA00035">
    <property type="reaction ID" value="UER00044"/>
</dbReference>
<dbReference type="GO" id="GO:0005737">
    <property type="term" value="C:cytoplasm"/>
    <property type="evidence" value="ECO:0007669"/>
    <property type="project" value="TreeGrafter"/>
</dbReference>
<dbReference type="GO" id="GO:0004834">
    <property type="term" value="F:tryptophan synthase activity"/>
    <property type="evidence" value="ECO:0007669"/>
    <property type="project" value="UniProtKB-EC"/>
</dbReference>
<dbReference type="FunFam" id="3.40.50.1100:FF:000004">
    <property type="entry name" value="Tryptophan synthase beta chain"/>
    <property type="match status" value="1"/>
</dbReference>
<dbReference type="Gene3D" id="3.40.50.1100">
    <property type="match status" value="2"/>
</dbReference>
<dbReference type="InterPro" id="IPR023026">
    <property type="entry name" value="Trp_synth_beta/beta-like"/>
</dbReference>
<dbReference type="InterPro" id="IPR001926">
    <property type="entry name" value="TrpB-like_PALP"/>
</dbReference>
<dbReference type="InterPro" id="IPR036052">
    <property type="entry name" value="TrpB-like_PALP_sf"/>
</dbReference>
<dbReference type="PANTHER" id="PTHR48077:SF3">
    <property type="entry name" value="TRYPTOPHAN SYNTHASE"/>
    <property type="match status" value="1"/>
</dbReference>
<dbReference type="PANTHER" id="PTHR48077">
    <property type="entry name" value="TRYPTOPHAN SYNTHASE-RELATED"/>
    <property type="match status" value="1"/>
</dbReference>
<dbReference type="Pfam" id="PF00291">
    <property type="entry name" value="PALP"/>
    <property type="match status" value="1"/>
</dbReference>
<dbReference type="SUPFAM" id="SSF53686">
    <property type="entry name" value="Tryptophan synthase beta subunit-like PLP-dependent enzymes"/>
    <property type="match status" value="1"/>
</dbReference>
<organism>
    <name type="scientific">Buchnera aphidicola subsp. Rhopalosiphum maidis</name>
    <dbReference type="NCBI Taxonomy" id="118109"/>
    <lineage>
        <taxon>Bacteria</taxon>
        <taxon>Pseudomonadati</taxon>
        <taxon>Pseudomonadota</taxon>
        <taxon>Gammaproteobacteria</taxon>
        <taxon>Enterobacterales</taxon>
        <taxon>Erwiniaceae</taxon>
        <taxon>Buchnera</taxon>
    </lineage>
</organism>
<evidence type="ECO:0000250" key="1"/>
<evidence type="ECO:0000305" key="2"/>